<comment type="function">
    <text evidence="1">Acts in a DNA repair pathway for removal of UV-induced DNA damage that is distinct from classical nucleotide excision repair and in repair of ionizing radiation damage. Functions in homologous recombination repair of DNA double strand breaks and in recovery of stalled replication forks. May prevent formation of excessive Holliday junctions or assist in their resolution.</text>
</comment>
<comment type="subunit">
    <text evidence="1 3">Component of the smc5/smc6 complex which consists of two subcomplexes, smc5-smc6-nse2 and nse1-nse2-nse4. Interacts with nse6 and rfp1.</text>
</comment>
<comment type="interaction">
    <interactant intactId="EBI-1150352">
        <id>O94668</id>
    </interactant>
    <interactant intactId="EBI-1150368">
        <id>O13688</id>
        <label>nse6</label>
    </interactant>
    <organismsDiffer>false</organismsDiffer>
    <experiments>7</experiments>
</comment>
<comment type="interaction">
    <interactant intactId="EBI-1150352">
        <id>O94668</id>
    </interactant>
    <interactant intactId="EBI-603756">
        <id>O13710</id>
        <label>smc5</label>
    </interactant>
    <organismsDiffer>false</organismsDiffer>
    <experiments>4</experiments>
</comment>
<comment type="interaction">
    <interactant intactId="EBI-1150352">
        <id>O94668</id>
    </interactant>
    <interactant intactId="EBI-603745">
        <id>P53692</id>
        <label>smc6</label>
    </interactant>
    <organismsDiffer>false</organismsDiffer>
    <experiments>2</experiments>
</comment>
<comment type="subcellular location">
    <subcellularLocation>
        <location evidence="2">Cytoplasm</location>
    </subcellularLocation>
    <subcellularLocation>
        <location evidence="1 2">Nucleus</location>
    </subcellularLocation>
    <subcellularLocation>
        <location evidence="1">Chromosome</location>
    </subcellularLocation>
</comment>
<accession>O94668</accession>
<organism>
    <name type="scientific">Schizosaccharomyces pombe (strain 972 / ATCC 24843)</name>
    <name type="common">Fission yeast</name>
    <dbReference type="NCBI Taxonomy" id="284812"/>
    <lineage>
        <taxon>Eukaryota</taxon>
        <taxon>Fungi</taxon>
        <taxon>Dikarya</taxon>
        <taxon>Ascomycota</taxon>
        <taxon>Taphrinomycotina</taxon>
        <taxon>Schizosaccharomycetes</taxon>
        <taxon>Schizosaccharomycetales</taxon>
        <taxon>Schizosaccharomycetaceae</taxon>
        <taxon>Schizosaccharomyces</taxon>
    </lineage>
</organism>
<dbReference type="EMBL" id="CU329671">
    <property type="protein sequence ID" value="CAB37606.1"/>
    <property type="molecule type" value="Genomic_DNA"/>
</dbReference>
<dbReference type="PIR" id="T40609">
    <property type="entry name" value="T40609"/>
</dbReference>
<dbReference type="RefSeq" id="NP_595508.1">
    <property type="nucleotide sequence ID" value="NM_001021418.2"/>
</dbReference>
<dbReference type="BioGRID" id="277427">
    <property type="interactions" value="48"/>
</dbReference>
<dbReference type="FunCoup" id="O94668">
    <property type="interactions" value="7"/>
</dbReference>
<dbReference type="IntAct" id="O94668">
    <property type="interactions" value="6"/>
</dbReference>
<dbReference type="MINT" id="O94668"/>
<dbReference type="STRING" id="284812.O94668"/>
<dbReference type="iPTMnet" id="O94668"/>
<dbReference type="PaxDb" id="4896-SPBC651.10.1"/>
<dbReference type="EnsemblFungi" id="SPBC651.10.1">
    <property type="protein sequence ID" value="SPBC651.10.1:pep"/>
    <property type="gene ID" value="SPBC651.10"/>
</dbReference>
<dbReference type="GeneID" id="2540911"/>
<dbReference type="KEGG" id="spo:2540911"/>
<dbReference type="PomBase" id="SPBC651.10">
    <property type="gene designation" value="nse5"/>
</dbReference>
<dbReference type="VEuPathDB" id="FungiDB:SPBC651.10"/>
<dbReference type="HOGENOM" id="CLU_712051_0_0_1"/>
<dbReference type="InParanoid" id="O94668"/>
<dbReference type="OMA" id="CIMKGAG"/>
<dbReference type="PRO" id="PR:O94668"/>
<dbReference type="Proteomes" id="UP000002485">
    <property type="component" value="Chromosome II"/>
</dbReference>
<dbReference type="GO" id="GO:0005829">
    <property type="term" value="C:cytosol"/>
    <property type="evidence" value="ECO:0007005"/>
    <property type="project" value="PomBase"/>
</dbReference>
<dbReference type="GO" id="GO:0005634">
    <property type="term" value="C:nucleus"/>
    <property type="evidence" value="ECO:0007005"/>
    <property type="project" value="PomBase"/>
</dbReference>
<dbReference type="GO" id="GO:0030915">
    <property type="term" value="C:Smc5-Smc6 complex"/>
    <property type="evidence" value="ECO:0000314"/>
    <property type="project" value="PomBase"/>
</dbReference>
<dbReference type="GO" id="GO:0140463">
    <property type="term" value="F:chromatin-protein adaptor activity"/>
    <property type="evidence" value="ECO:0000269"/>
    <property type="project" value="PomBase"/>
</dbReference>
<dbReference type="GO" id="GO:0006974">
    <property type="term" value="P:DNA damage response"/>
    <property type="evidence" value="ECO:0000315"/>
    <property type="project" value="PomBase"/>
</dbReference>
<dbReference type="GO" id="GO:0006302">
    <property type="term" value="P:double-strand break repair"/>
    <property type="evidence" value="ECO:0000269"/>
    <property type="project" value="PomBase"/>
</dbReference>
<dbReference type="GO" id="GO:0000724">
    <property type="term" value="P:double-strand break repair via homologous recombination"/>
    <property type="evidence" value="ECO:0000305"/>
    <property type="project" value="PomBase"/>
</dbReference>
<dbReference type="InterPro" id="IPR014803">
    <property type="entry name" value="DNA_repair_Nse5/Nse6"/>
</dbReference>
<dbReference type="Pfam" id="PF08691">
    <property type="entry name" value="Nse5"/>
    <property type="match status" value="1"/>
</dbReference>
<name>NSE5_SCHPO</name>
<evidence type="ECO:0000269" key="1">
    <source>
    </source>
</evidence>
<evidence type="ECO:0000269" key="2">
    <source>
    </source>
</evidence>
<evidence type="ECO:0000269" key="3">
    <source>
    </source>
</evidence>
<feature type="chain" id="PRO_0000116527" description="Non-structural maintenance of chromosome element 5">
    <location>
        <begin position="1"/>
        <end position="388"/>
    </location>
</feature>
<gene>
    <name type="primary">nse5</name>
    <name type="ORF">SPBC651.10</name>
</gene>
<reference key="1">
    <citation type="journal article" date="2002" name="Nature">
        <title>The genome sequence of Schizosaccharomyces pombe.</title>
        <authorList>
            <person name="Wood V."/>
            <person name="Gwilliam R."/>
            <person name="Rajandream M.A."/>
            <person name="Lyne M.H."/>
            <person name="Lyne R."/>
            <person name="Stewart A."/>
            <person name="Sgouros J.G."/>
            <person name="Peat N."/>
            <person name="Hayles J."/>
            <person name="Baker S.G."/>
            <person name="Basham D."/>
            <person name="Bowman S."/>
            <person name="Brooks K."/>
            <person name="Brown D."/>
            <person name="Brown S."/>
            <person name="Chillingworth T."/>
            <person name="Churcher C.M."/>
            <person name="Collins M."/>
            <person name="Connor R."/>
            <person name="Cronin A."/>
            <person name="Davis P."/>
            <person name="Feltwell T."/>
            <person name="Fraser A."/>
            <person name="Gentles S."/>
            <person name="Goble A."/>
            <person name="Hamlin N."/>
            <person name="Harris D.E."/>
            <person name="Hidalgo J."/>
            <person name="Hodgson G."/>
            <person name="Holroyd S."/>
            <person name="Hornsby T."/>
            <person name="Howarth S."/>
            <person name="Huckle E.J."/>
            <person name="Hunt S."/>
            <person name="Jagels K."/>
            <person name="James K.D."/>
            <person name="Jones L."/>
            <person name="Jones M."/>
            <person name="Leather S."/>
            <person name="McDonald S."/>
            <person name="McLean J."/>
            <person name="Mooney P."/>
            <person name="Moule S."/>
            <person name="Mungall K.L."/>
            <person name="Murphy L.D."/>
            <person name="Niblett D."/>
            <person name="Odell C."/>
            <person name="Oliver K."/>
            <person name="O'Neil S."/>
            <person name="Pearson D."/>
            <person name="Quail M.A."/>
            <person name="Rabbinowitsch E."/>
            <person name="Rutherford K.M."/>
            <person name="Rutter S."/>
            <person name="Saunders D."/>
            <person name="Seeger K."/>
            <person name="Sharp S."/>
            <person name="Skelton J."/>
            <person name="Simmonds M.N."/>
            <person name="Squares R."/>
            <person name="Squares S."/>
            <person name="Stevens K."/>
            <person name="Taylor K."/>
            <person name="Taylor R.G."/>
            <person name="Tivey A."/>
            <person name="Walsh S.V."/>
            <person name="Warren T."/>
            <person name="Whitehead S."/>
            <person name="Woodward J.R."/>
            <person name="Volckaert G."/>
            <person name="Aert R."/>
            <person name="Robben J."/>
            <person name="Grymonprez B."/>
            <person name="Weltjens I."/>
            <person name="Vanstreels E."/>
            <person name="Rieger M."/>
            <person name="Schaefer M."/>
            <person name="Mueller-Auer S."/>
            <person name="Gabel C."/>
            <person name="Fuchs M."/>
            <person name="Duesterhoeft A."/>
            <person name="Fritzc C."/>
            <person name="Holzer E."/>
            <person name="Moestl D."/>
            <person name="Hilbert H."/>
            <person name="Borzym K."/>
            <person name="Langer I."/>
            <person name="Beck A."/>
            <person name="Lehrach H."/>
            <person name="Reinhardt R."/>
            <person name="Pohl T.M."/>
            <person name="Eger P."/>
            <person name="Zimmermann W."/>
            <person name="Wedler H."/>
            <person name="Wambutt R."/>
            <person name="Purnelle B."/>
            <person name="Goffeau A."/>
            <person name="Cadieu E."/>
            <person name="Dreano S."/>
            <person name="Gloux S."/>
            <person name="Lelaure V."/>
            <person name="Mottier S."/>
            <person name="Galibert F."/>
            <person name="Aves S.J."/>
            <person name="Xiang Z."/>
            <person name="Hunt C."/>
            <person name="Moore K."/>
            <person name="Hurst S.M."/>
            <person name="Lucas M."/>
            <person name="Rochet M."/>
            <person name="Gaillardin C."/>
            <person name="Tallada V.A."/>
            <person name="Garzon A."/>
            <person name="Thode G."/>
            <person name="Daga R.R."/>
            <person name="Cruzado L."/>
            <person name="Jimenez J."/>
            <person name="Sanchez M."/>
            <person name="del Rey F."/>
            <person name="Benito J."/>
            <person name="Dominguez A."/>
            <person name="Revuelta J.L."/>
            <person name="Moreno S."/>
            <person name="Armstrong J."/>
            <person name="Forsburg S.L."/>
            <person name="Cerutti L."/>
            <person name="Lowe T."/>
            <person name="McCombie W.R."/>
            <person name="Paulsen I."/>
            <person name="Potashkin J."/>
            <person name="Shpakovski G.V."/>
            <person name="Ussery D."/>
            <person name="Barrell B.G."/>
            <person name="Nurse P."/>
        </authorList>
    </citation>
    <scope>NUCLEOTIDE SEQUENCE [LARGE SCALE GENOMIC DNA]</scope>
    <source>
        <strain>972 / ATCC 24843</strain>
    </source>
</reference>
<reference key="2">
    <citation type="journal article" date="2006" name="Mol. Cell. Biol.">
        <title>The Nse5-Nse6 dimer mediates DNA repair roles of the Smc5-Smc6 complex.</title>
        <authorList>
            <person name="Pebernard S."/>
            <person name="Wohlschlegel J."/>
            <person name="McDonald W.H."/>
            <person name="Yates J.R. III"/>
            <person name="Boddy M.N."/>
        </authorList>
    </citation>
    <scope>PARTIAL PROTEIN SEQUENCE</scope>
    <scope>FUNCTION</scope>
    <scope>IDENTIFICATION IN THE SMC5/SMC6 COMPLEX</scope>
    <scope>INTERACTION WITH NSE6</scope>
    <scope>SUBCELLULAR LOCATION</scope>
    <scope>IDENTIFICATION BY MASS SPECTROMETRY</scope>
</reference>
<reference key="3">
    <citation type="journal article" date="2006" name="Nat. Biotechnol.">
        <title>ORFeome cloning and global analysis of protein localization in the fission yeast Schizosaccharomyces pombe.</title>
        <authorList>
            <person name="Matsuyama A."/>
            <person name="Arai R."/>
            <person name="Yashiroda Y."/>
            <person name="Shirai A."/>
            <person name="Kamata A."/>
            <person name="Sekido S."/>
            <person name="Kobayashi Y."/>
            <person name="Hashimoto A."/>
            <person name="Hamamoto M."/>
            <person name="Hiraoka Y."/>
            <person name="Horinouchi S."/>
            <person name="Yoshida M."/>
        </authorList>
    </citation>
    <scope>SUBCELLULAR LOCATION [LARGE SCALE ANALYSIS]</scope>
</reference>
<reference key="4">
    <citation type="journal article" date="2007" name="J. Biol. Chem.">
        <title>Fission yeast Rnf4 homologs are required for DNA repair.</title>
        <authorList>
            <person name="Kosoy A."/>
            <person name="Calonge T.M."/>
            <person name="Outwin E.A."/>
            <person name="O'Connell M.J."/>
        </authorList>
    </citation>
    <scope>INTERACTION WITH RFP1</scope>
</reference>
<protein>
    <recommendedName>
        <fullName>Non-structural maintenance of chromosome element 5</fullName>
        <shortName>Non-SMC element 5</shortName>
    </recommendedName>
</protein>
<proteinExistence type="evidence at protein level"/>
<sequence length="388" mass="44739">MNSALKAIIELCIEEDLLPKSLDVLEYLLSTTSIPIPACYIRMCITLLVHPEYPTSSNIQESCNWILQQVVENRSKINFDAWSFENDLSDNDMPKENYLKIFSNQCLFTQDVDYWDLIAYMSSRPPDLERWMSLMDIWLRILEIDAEENGSALMKKYMGEDLCELQDAIRICFSCFTLPQQTMESPFATSMSKAPAKTESRGSNSFEGTSRLANLGAKLLCLIWAMLPKGRFFVVHLTDAFHFLSKLDERFSKLNAKQQDLFFGNLGASNLRYCLSQYILMKGIGIGINIRHTRCEFTKQLTQLLPTSLPKNKIRQKLHLRAWVSFLGSALRESDRNFDKELFYTTLKQLYTMYQQTELVGIDRPMAILKDMLVLLDISKKLSLDKIV</sequence>
<keyword id="KW-0158">Chromosome</keyword>
<keyword id="KW-0963">Cytoplasm</keyword>
<keyword id="KW-0903">Direct protein sequencing</keyword>
<keyword id="KW-0227">DNA damage</keyword>
<keyword id="KW-0233">DNA recombination</keyword>
<keyword id="KW-0234">DNA repair</keyword>
<keyword id="KW-0539">Nucleus</keyword>
<keyword id="KW-1185">Reference proteome</keyword>